<gene>
    <name evidence="1" type="primary">rplE</name>
    <name type="ordered locus">BOV_1184</name>
</gene>
<comment type="function">
    <text evidence="1">This is one of the proteins that bind and probably mediate the attachment of the 5S RNA into the large ribosomal subunit, where it forms part of the central protuberance. In the 70S ribosome it contacts protein S13 of the 30S subunit (bridge B1b), connecting the 2 subunits; this bridge is implicated in subunit movement. Contacts the P site tRNA; the 5S rRNA and some of its associated proteins might help stabilize positioning of ribosome-bound tRNAs.</text>
</comment>
<comment type="subunit">
    <text evidence="1">Part of the 50S ribosomal subunit; part of the 5S rRNA/L5/L18/L25 subcomplex. Contacts the 5S rRNA and the P site tRNA. Forms a bridge to the 30S subunit in the 70S ribosome.</text>
</comment>
<comment type="similarity">
    <text evidence="1">Belongs to the universal ribosomal protein uL5 family.</text>
</comment>
<sequence length="185" mass="21074">MAEAKALPRFKKLYQDNIRKALLEEFKYDNEMQIPRITKVVLNMGVGEATGDSKKPAVAAEDLAMIAGQKAVVTRARNSIATFKLREGMPIGAKVTLRQDRMYEFLDRLITIALPRVRDFRGLNPKSFDGRGNYAMGIKEHIVFPEINYDKVDQIWGMDIIVCTTAKTDDEARSLLRAFNFPFRQ</sequence>
<evidence type="ECO:0000255" key="1">
    <source>
        <dbReference type="HAMAP-Rule" id="MF_01333"/>
    </source>
</evidence>
<evidence type="ECO:0000305" key="2"/>
<organism>
    <name type="scientific">Brucella ovis (strain ATCC 25840 / 63/290 / NCTC 10512)</name>
    <dbReference type="NCBI Taxonomy" id="444178"/>
    <lineage>
        <taxon>Bacteria</taxon>
        <taxon>Pseudomonadati</taxon>
        <taxon>Pseudomonadota</taxon>
        <taxon>Alphaproteobacteria</taxon>
        <taxon>Hyphomicrobiales</taxon>
        <taxon>Brucellaceae</taxon>
        <taxon>Brucella/Ochrobactrum group</taxon>
        <taxon>Brucella</taxon>
    </lineage>
</organism>
<protein>
    <recommendedName>
        <fullName evidence="1">Large ribosomal subunit protein uL5</fullName>
    </recommendedName>
    <alternativeName>
        <fullName evidence="2">50S ribosomal protein L5</fullName>
    </alternativeName>
</protein>
<feature type="chain" id="PRO_1000052699" description="Large ribosomal subunit protein uL5">
    <location>
        <begin position="1"/>
        <end position="185"/>
    </location>
</feature>
<proteinExistence type="inferred from homology"/>
<reference key="1">
    <citation type="journal article" date="2009" name="PLoS ONE">
        <title>Genome degradation in Brucella ovis corresponds with narrowing of its host range and tissue tropism.</title>
        <authorList>
            <person name="Tsolis R.M."/>
            <person name="Seshadri R."/>
            <person name="Santos R.L."/>
            <person name="Sangari F.J."/>
            <person name="Lobo J.M."/>
            <person name="de Jong M.F."/>
            <person name="Ren Q."/>
            <person name="Myers G."/>
            <person name="Brinkac L.M."/>
            <person name="Nelson W.C."/>
            <person name="Deboy R.T."/>
            <person name="Angiuoli S."/>
            <person name="Khouri H."/>
            <person name="Dimitrov G."/>
            <person name="Robinson J.R."/>
            <person name="Mulligan S."/>
            <person name="Walker R.L."/>
            <person name="Elzer P.E."/>
            <person name="Hassan K.A."/>
            <person name="Paulsen I.T."/>
        </authorList>
    </citation>
    <scope>NUCLEOTIDE SEQUENCE [LARGE SCALE GENOMIC DNA]</scope>
    <source>
        <strain>ATCC 25840 / 63/290 / NCTC 10512</strain>
    </source>
</reference>
<dbReference type="EMBL" id="CP000708">
    <property type="protein sequence ID" value="ABQ61047.1"/>
    <property type="molecule type" value="Genomic_DNA"/>
</dbReference>
<dbReference type="RefSeq" id="WP_002964350.1">
    <property type="nucleotide sequence ID" value="NC_009505.1"/>
</dbReference>
<dbReference type="SMR" id="A5VQZ4"/>
<dbReference type="GeneID" id="97533536"/>
<dbReference type="KEGG" id="bov:BOV_1184"/>
<dbReference type="HOGENOM" id="CLU_061015_2_1_5"/>
<dbReference type="PhylomeDB" id="A5VQZ4"/>
<dbReference type="Proteomes" id="UP000006383">
    <property type="component" value="Chromosome I"/>
</dbReference>
<dbReference type="GO" id="GO:1990904">
    <property type="term" value="C:ribonucleoprotein complex"/>
    <property type="evidence" value="ECO:0007669"/>
    <property type="project" value="UniProtKB-KW"/>
</dbReference>
<dbReference type="GO" id="GO:0005840">
    <property type="term" value="C:ribosome"/>
    <property type="evidence" value="ECO:0007669"/>
    <property type="project" value="UniProtKB-KW"/>
</dbReference>
<dbReference type="GO" id="GO:0019843">
    <property type="term" value="F:rRNA binding"/>
    <property type="evidence" value="ECO:0007669"/>
    <property type="project" value="UniProtKB-UniRule"/>
</dbReference>
<dbReference type="GO" id="GO:0003735">
    <property type="term" value="F:structural constituent of ribosome"/>
    <property type="evidence" value="ECO:0007669"/>
    <property type="project" value="InterPro"/>
</dbReference>
<dbReference type="GO" id="GO:0000049">
    <property type="term" value="F:tRNA binding"/>
    <property type="evidence" value="ECO:0007669"/>
    <property type="project" value="UniProtKB-UniRule"/>
</dbReference>
<dbReference type="GO" id="GO:0006412">
    <property type="term" value="P:translation"/>
    <property type="evidence" value="ECO:0007669"/>
    <property type="project" value="UniProtKB-UniRule"/>
</dbReference>
<dbReference type="FunFam" id="3.30.1440.10:FF:000001">
    <property type="entry name" value="50S ribosomal protein L5"/>
    <property type="match status" value="1"/>
</dbReference>
<dbReference type="Gene3D" id="3.30.1440.10">
    <property type="match status" value="1"/>
</dbReference>
<dbReference type="HAMAP" id="MF_01333_B">
    <property type="entry name" value="Ribosomal_uL5_B"/>
    <property type="match status" value="1"/>
</dbReference>
<dbReference type="InterPro" id="IPR002132">
    <property type="entry name" value="Ribosomal_uL5"/>
</dbReference>
<dbReference type="InterPro" id="IPR020930">
    <property type="entry name" value="Ribosomal_uL5_bac-type"/>
</dbReference>
<dbReference type="InterPro" id="IPR031309">
    <property type="entry name" value="Ribosomal_uL5_C"/>
</dbReference>
<dbReference type="InterPro" id="IPR020929">
    <property type="entry name" value="Ribosomal_uL5_CS"/>
</dbReference>
<dbReference type="InterPro" id="IPR022803">
    <property type="entry name" value="Ribosomal_uL5_dom_sf"/>
</dbReference>
<dbReference type="InterPro" id="IPR031310">
    <property type="entry name" value="Ribosomal_uL5_N"/>
</dbReference>
<dbReference type="NCBIfam" id="NF000585">
    <property type="entry name" value="PRK00010.1"/>
    <property type="match status" value="1"/>
</dbReference>
<dbReference type="PANTHER" id="PTHR11994">
    <property type="entry name" value="60S RIBOSOMAL PROTEIN L11-RELATED"/>
    <property type="match status" value="1"/>
</dbReference>
<dbReference type="Pfam" id="PF00281">
    <property type="entry name" value="Ribosomal_L5"/>
    <property type="match status" value="1"/>
</dbReference>
<dbReference type="Pfam" id="PF00673">
    <property type="entry name" value="Ribosomal_L5_C"/>
    <property type="match status" value="1"/>
</dbReference>
<dbReference type="PIRSF" id="PIRSF002161">
    <property type="entry name" value="Ribosomal_L5"/>
    <property type="match status" value="1"/>
</dbReference>
<dbReference type="SUPFAM" id="SSF55282">
    <property type="entry name" value="RL5-like"/>
    <property type="match status" value="1"/>
</dbReference>
<dbReference type="PROSITE" id="PS00358">
    <property type="entry name" value="RIBOSOMAL_L5"/>
    <property type="match status" value="1"/>
</dbReference>
<keyword id="KW-0687">Ribonucleoprotein</keyword>
<keyword id="KW-0689">Ribosomal protein</keyword>
<keyword id="KW-0694">RNA-binding</keyword>
<keyword id="KW-0699">rRNA-binding</keyword>
<keyword id="KW-0820">tRNA-binding</keyword>
<name>RL5_BRUO2</name>
<accession>A5VQZ4</accession>